<comment type="function">
    <text evidence="1 3">Mediates binding to human platelets, possibly through a receptor-ligand interaction. Probably associated with virulence in endovascular infection (By similarity).</text>
</comment>
<comment type="subcellular location">
    <subcellularLocation>
        <location evidence="4">Secreted</location>
        <location evidence="4">Cell wall</location>
        <topology evidence="4">Peptidoglycan-anchor</topology>
    </subcellularLocation>
    <text evidence="3">Exported by the accessory SecA2/SecY2 system. Anchored to the cell wall by sortase A (By similarity).</text>
</comment>
<comment type="PTM">
    <text evidence="1 3">Proteolytically cleaved by a metalloprotease.</text>
</comment>
<comment type="PTM">
    <text evidence="2 3">Glycosylated (By similarity). It is probable that most of the Ser residues in SSR1 and SSR2 are O-GlcNAcylated. Sequential glycosylation by sugar transferases are able to generate complex sugar polymorphisms (By similarity).</text>
</comment>
<comment type="similarity">
    <text evidence="6">Belongs to the serine-rich repeat protein (SRRP) family.</text>
</comment>
<protein>
    <recommendedName>
        <fullName>Serine-rich adhesin for platelets</fullName>
    </recommendedName>
    <alternativeName>
        <fullName evidence="6">Adhesin SraP</fullName>
    </alternativeName>
    <alternativeName>
        <fullName>Staphylococcus aureus surface protein A</fullName>
    </alternativeName>
</protein>
<evidence type="ECO:0000250" key="1"/>
<evidence type="ECO:0000250" key="2">
    <source>
        <dbReference type="UniProtKB" id="A0A0H2URK1"/>
    </source>
</evidence>
<evidence type="ECO:0000250" key="3">
    <source>
        <dbReference type="UniProtKB" id="Q2FUW1"/>
    </source>
</evidence>
<evidence type="ECO:0000255" key="4">
    <source>
        <dbReference type="PROSITE-ProRule" id="PRU00477"/>
    </source>
</evidence>
<evidence type="ECO:0000256" key="5">
    <source>
        <dbReference type="SAM" id="MobiDB-lite"/>
    </source>
</evidence>
<evidence type="ECO:0000305" key="6"/>
<gene>
    <name type="primary">sraP</name>
    <name type="synonym">sasA</name>
    <name type="ordered locus">SAS2540</name>
</gene>
<dbReference type="EMBL" id="BX571857">
    <property type="protein sequence ID" value="CAG44357.1"/>
    <property type="molecule type" value="Genomic_DNA"/>
</dbReference>
<dbReference type="RefSeq" id="WP_000044589.1">
    <property type="nucleotide sequence ID" value="NC_002953.3"/>
</dbReference>
<dbReference type="SMR" id="Q6G620"/>
<dbReference type="KEGG" id="sas:SAS2540"/>
<dbReference type="HOGENOM" id="CLU_002109_0_0_9"/>
<dbReference type="GO" id="GO:0005576">
    <property type="term" value="C:extracellular region"/>
    <property type="evidence" value="ECO:0007669"/>
    <property type="project" value="UniProtKB-KW"/>
</dbReference>
<dbReference type="GO" id="GO:0016020">
    <property type="term" value="C:membrane"/>
    <property type="evidence" value="ECO:0007669"/>
    <property type="project" value="InterPro"/>
</dbReference>
<dbReference type="GO" id="GO:0005509">
    <property type="term" value="F:calcium ion binding"/>
    <property type="evidence" value="ECO:0007669"/>
    <property type="project" value="InterPro"/>
</dbReference>
<dbReference type="GO" id="GO:0007155">
    <property type="term" value="P:cell adhesion"/>
    <property type="evidence" value="ECO:0007669"/>
    <property type="project" value="UniProtKB-KW"/>
</dbReference>
<dbReference type="CDD" id="cd01951">
    <property type="entry name" value="lectin_L-type"/>
    <property type="match status" value="1"/>
</dbReference>
<dbReference type="Gene3D" id="2.60.120.200">
    <property type="match status" value="1"/>
</dbReference>
<dbReference type="Gene3D" id="3.10.20.320">
    <property type="entry name" value="Putative peptidoglycan bound protein (lpxtg motif)"/>
    <property type="match status" value="1"/>
</dbReference>
<dbReference type="InterPro" id="IPR015919">
    <property type="entry name" value="Cadherin-like_sf"/>
</dbReference>
<dbReference type="InterPro" id="IPR013320">
    <property type="entry name" value="ConA-like_dom_sf"/>
</dbReference>
<dbReference type="InterPro" id="IPR022263">
    <property type="entry name" value="KxYKxGKxW"/>
</dbReference>
<dbReference type="InterPro" id="IPR056573">
    <property type="entry name" value="Lectin_L-type_dom"/>
</dbReference>
<dbReference type="InterPro" id="IPR019931">
    <property type="entry name" value="LPXTG_anchor"/>
</dbReference>
<dbReference type="NCBIfam" id="TIGR03715">
    <property type="entry name" value="KxYKxGKxW"/>
    <property type="match status" value="1"/>
</dbReference>
<dbReference type="NCBIfam" id="TIGR01167">
    <property type="entry name" value="LPXTG_anchor"/>
    <property type="match status" value="1"/>
</dbReference>
<dbReference type="PANTHER" id="PTHR22928">
    <property type="entry name" value="TELOMERE-ASSOCIATED PROTEIN RIF1"/>
    <property type="match status" value="1"/>
</dbReference>
<dbReference type="PANTHER" id="PTHR22928:SF3">
    <property type="entry name" value="TELOMERE-ASSOCIATED PROTEIN RIF1"/>
    <property type="match status" value="1"/>
</dbReference>
<dbReference type="Pfam" id="PF00746">
    <property type="entry name" value="Gram_pos_anchor"/>
    <property type="match status" value="1"/>
</dbReference>
<dbReference type="Pfam" id="PF19258">
    <property type="entry name" value="KxYKxGKxW_sig"/>
    <property type="match status" value="1"/>
</dbReference>
<dbReference type="Pfam" id="PF18483">
    <property type="entry name" value="Lectin_L-type_dom"/>
    <property type="match status" value="1"/>
</dbReference>
<dbReference type="SUPFAM" id="SSF49313">
    <property type="entry name" value="Cadherin-like"/>
    <property type="match status" value="2"/>
</dbReference>
<dbReference type="SUPFAM" id="SSF49899">
    <property type="entry name" value="Concanavalin A-like lectins/glucanases"/>
    <property type="match status" value="1"/>
</dbReference>
<dbReference type="PROSITE" id="PS50847">
    <property type="entry name" value="GRAM_POS_ANCHORING"/>
    <property type="match status" value="1"/>
</dbReference>
<keyword id="KW-0130">Cell adhesion</keyword>
<keyword id="KW-0134">Cell wall</keyword>
<keyword id="KW-0325">Glycoprotein</keyword>
<keyword id="KW-0572">Peptidoglycan-anchor</keyword>
<keyword id="KW-0964">Secreted</keyword>
<keyword id="KW-0732">Signal</keyword>
<keyword id="KW-0843">Virulence</keyword>
<sequence length="2275" mass="228407">MSKRQKEFHDSLANEKTRVRLYKSGKNWVKSGIKEIEMFKIMGLPFISHSLVSQDNQSISKKMTGYGLKTTAVIGGAFTVNMLHDQQAFAASDAPLTSELNTQSETVGNQNSTTIEASTSTADSTSVTKNSSSVQTSNSDTVSSEKSEKVTSTTNSTSNQQEKLTSTSESTSSKNTTSSSDTKSVASTSSTEQPINTSTNQSTASNNTSQSTTPSSVNLNKTSTTSTSTAPVKLRTFSRLAMSTFASAATTTAVTANTITVNKDNLKQYMTTSGNATYDQSTGIVTLTQDAYSQKGAITLGTRIDSNKSFHFSGKVNLGNKYEGNGNGGDGIGFAFSPGVLGETGLNGAAVGIGGLSNAFGFKLDTYHNTSKPNSAAKANADPSNVAGGGAFGAFVTTDSYGVATTYTSSSTADNAAKLKVQPTNNTFQDFDINYNGDTKVMTVTYAGQTWTRNISDWIAKSGTTNFSLSMTASTGGATNLQQVQFGTFEYTESAVTQVRYVDVTTGKDIIPPKTYSGNVDQVVTIDNQQSALTAKGYNYTSVDSSYASTYNDTNKTVKMTNAGQSVTYYFTDVKAPTVTVGNQTIEVGKTMNPVVLTTTDNGTGTVTNTVTGLPSGLSYDSATNSIIGTPTKIGQSTVTVVSTDQANNKSTTTFTINVVDTTAPTVTPIGDQSSEVYSPISPIKIATQDNSGNAVTNTVTGLPSGLTFDSTNNTISGTPTNIGTSTITIVSTDASGNKTTTTFKYEVTRNSMSDSVSTSGSTQQSQSVSTSKADSQSASTSTSGSIVVSTSASTSKSTSVSLSDSVSASKSLSTSESNSVSSSTSTSLVNSQSVSSSMSDSASKSTSLSDSISNSSSTEKSESLSTSTSDSLRTSTSLSDSLSMSTSGSLSKSKSLSTSTSESSSTSASLSDSTSNAISTSESLSESASTSDSISISNSIANSQSASTSKSDSQSTSISLSTSDSKSMSTSESLSDSTSTSGSVSGSLSIAASQSVSTSTSDSMSTSEIVSDSISTSGSLSASDSKSMSVSSSMSTSQSGSTSESLSDSQSTSDSDSKSLSLSTSQSGSTSTSTSTSASVRTSESQSTSGSMSASQSDSMSISTSFSDSTSDSKSASTASSESISQSASTSTSGSVSTSTSLSTSNSERTSTSMSDSTSLSTSESDSISESTSTSDSISEAISASESTFISLSESNSTSDSESQSASAFLSESLSESTSESTSESVSSSTSESTSLSDSTSESGSTSTSLSNSTSGSASISTSTSISESTSTFKSESVSTSLSMSTSTSLSDSTSLSTSLSDSTSDSKSDSLSTSMSTSDSISTSKSDSISTSTSLSGSTSESESDSTSSSESKSDSTSMSISMSQSTSGSTSTSTSTSLSDSTSTSLSLSASMNQSGVDSNSASQSASNSTSTSTSESDSQSTSSYTSQSTSQSESTSTSTSLSDSTSISKSTSQSGSVSTSASLSGSESESDSQSISTSASESTSESASTSLSDSTSTSNSGSASTSTSLSNSASASESDSSSTSLSDSTSASMQSSESDSQSTSASLSDSLSTSTSNRMSTIASLSTSVSTSESGSTSESTSESDSTSTSLSDSQSTSRSTSASGSASTSTSTSDSRSTSASTSTSMRTSTSDSQSMSLSTSTSTSMSDSTSLSDSVSDSTSDSTSASTSGSMSVSISLSDSTSTSTSASEVMSASISDSQSMSESVNDSESVSESNSESDSKSMSGSTSVSDSGSLSVSTSLRKSESVSESSSLSGSQSMSDSVSTSDSSSLSVSTSLRSSESVSESDSLSDSKSTSGSTSTSTSGSLSTSTSLSGSESVSESTSLSDSISMSDSTSTSDSDSLSGSISLSGSTSLSTSDSLSDSKSLSSSQSMSGSESTSTSVSDSQSSSTSNSQFDSMSISASESDSMSTSDSSSISGSNSTSTSLSTSDSMSGSVSVSTSTSLSDSISGSTSLSDSSSTSTSTSLSDSMSQSQSTSTSASGSLSTSISTSMSMSASTSSSQSTSVSTSLSTSDSISDSTSISISGSQSTVESESTSDSTSISDSESLSTSDSDSTSTSTSDSTSGSTSTSISESLSTSGSGSTSVSDSTSMSESDSTSVSMSQSMSGSTYNSTSVSDSESVSTSTSTSLSTSDSTSTSESLSTSMSGSQSISDSTSTSMSGSTSTSESNSMHPSDSMSMHHTHSTSTSRLSSEATTSTSESQSTLSATSEVTKHNGTPAQSEKRLPDTGDSIKQNGLLGGVMTLLVGLGLMKRKKKKDENDQDDSQA</sequence>
<reference key="1">
    <citation type="journal article" date="2004" name="Proc. Natl. Acad. Sci. U.S.A.">
        <title>Complete genomes of two clinical Staphylococcus aureus strains: evidence for the rapid evolution of virulence and drug resistance.</title>
        <authorList>
            <person name="Holden M.T.G."/>
            <person name="Feil E.J."/>
            <person name="Lindsay J.A."/>
            <person name="Peacock S.J."/>
            <person name="Day N.P.J."/>
            <person name="Enright M.C."/>
            <person name="Foster T.J."/>
            <person name="Moore C.E."/>
            <person name="Hurst L."/>
            <person name="Atkin R."/>
            <person name="Barron A."/>
            <person name="Bason N."/>
            <person name="Bentley S.D."/>
            <person name="Chillingworth C."/>
            <person name="Chillingworth T."/>
            <person name="Churcher C."/>
            <person name="Clark L."/>
            <person name="Corton C."/>
            <person name="Cronin A."/>
            <person name="Doggett J."/>
            <person name="Dowd L."/>
            <person name="Feltwell T."/>
            <person name="Hance Z."/>
            <person name="Harris B."/>
            <person name="Hauser H."/>
            <person name="Holroyd S."/>
            <person name="Jagels K."/>
            <person name="James K.D."/>
            <person name="Lennard N."/>
            <person name="Line A."/>
            <person name="Mayes R."/>
            <person name="Moule S."/>
            <person name="Mungall K."/>
            <person name="Ormond D."/>
            <person name="Quail M.A."/>
            <person name="Rabbinowitsch E."/>
            <person name="Rutherford K.M."/>
            <person name="Sanders M."/>
            <person name="Sharp S."/>
            <person name="Simmonds M."/>
            <person name="Stevens K."/>
            <person name="Whitehead S."/>
            <person name="Barrell B.G."/>
            <person name="Spratt B.G."/>
            <person name="Parkhill J."/>
        </authorList>
    </citation>
    <scope>NUCLEOTIDE SEQUENCE [LARGE SCALE GENOMIC DNA]</scope>
    <source>
        <strain>MSSA476</strain>
    </source>
</reference>
<proteinExistence type="inferred from homology"/>
<feature type="signal peptide" evidence="3">
    <location>
        <begin position="1"/>
        <end position="89"/>
    </location>
</feature>
<feature type="chain" id="PRO_0000273924" description="Serine-rich adhesin for platelets">
    <location>
        <begin position="90"/>
        <end position="2236"/>
    </location>
</feature>
<feature type="propeptide" id="PRO_0000273925" description="Removed by sortase" evidence="4">
    <location>
        <begin position="2237"/>
        <end position="2275"/>
    </location>
</feature>
<feature type="region of interest" description="Serine-rich repeat region 1, SRR1" evidence="3">
    <location>
        <begin position="90"/>
        <end position="230"/>
    </location>
</feature>
<feature type="region of interest" description="Disordered" evidence="5">
    <location>
        <begin position="100"/>
        <end position="229"/>
    </location>
</feature>
<feature type="region of interest" description="Non-repeat region (NRR)" evidence="3">
    <location>
        <begin position="231"/>
        <end position="751"/>
    </location>
</feature>
<feature type="region of interest" description="Disordered" evidence="5">
    <location>
        <begin position="751"/>
        <end position="2247"/>
    </location>
</feature>
<feature type="region of interest" description="Serine-rich repeat region 2, SRR2" evidence="3">
    <location>
        <begin position="752"/>
        <end position="2236"/>
    </location>
</feature>
<feature type="short sequence motif" description="LPXTG sorting signal" evidence="4">
    <location>
        <begin position="2233"/>
        <end position="2237"/>
    </location>
</feature>
<feature type="compositionally biased region" description="Polar residues" evidence="5">
    <location>
        <begin position="100"/>
        <end position="111"/>
    </location>
</feature>
<feature type="compositionally biased region" description="Low complexity" evidence="5">
    <location>
        <begin position="112"/>
        <end position="128"/>
    </location>
</feature>
<feature type="compositionally biased region" description="Polar residues" evidence="5">
    <location>
        <begin position="129"/>
        <end position="140"/>
    </location>
</feature>
<feature type="compositionally biased region" description="Low complexity" evidence="5">
    <location>
        <begin position="150"/>
        <end position="229"/>
    </location>
</feature>
<feature type="compositionally biased region" description="Low complexity" evidence="5">
    <location>
        <begin position="752"/>
        <end position="1392"/>
    </location>
</feature>
<feature type="compositionally biased region" description="Low complexity" evidence="5">
    <location>
        <begin position="1402"/>
        <end position="2218"/>
    </location>
</feature>
<feature type="modified residue" description="Pentaglycyl murein peptidoglycan amidated threonine" evidence="4">
    <location>
        <position position="2236"/>
    </location>
</feature>
<accession>Q6G620</accession>
<organism>
    <name type="scientific">Staphylococcus aureus (strain MSSA476)</name>
    <dbReference type="NCBI Taxonomy" id="282459"/>
    <lineage>
        <taxon>Bacteria</taxon>
        <taxon>Bacillati</taxon>
        <taxon>Bacillota</taxon>
        <taxon>Bacilli</taxon>
        <taxon>Bacillales</taxon>
        <taxon>Staphylococcaceae</taxon>
        <taxon>Staphylococcus</taxon>
    </lineage>
</organism>
<name>SRAP_STAAS</name>